<name>UREE_POLNA</name>
<reference key="1">
    <citation type="journal article" date="2009" name="Environ. Microbiol.">
        <title>The genome of Polaromonas naphthalenivorans strain CJ2, isolated from coal tar-contaminated sediment, reveals physiological and metabolic versatility and evolution through extensive horizontal gene transfer.</title>
        <authorList>
            <person name="Yagi J.M."/>
            <person name="Sims D."/>
            <person name="Brettin T."/>
            <person name="Bruce D."/>
            <person name="Madsen E.L."/>
        </authorList>
    </citation>
    <scope>NUCLEOTIDE SEQUENCE [LARGE SCALE GENOMIC DNA]</scope>
    <source>
        <strain>CJ2</strain>
    </source>
</reference>
<organism>
    <name type="scientific">Polaromonas naphthalenivorans (strain CJ2)</name>
    <dbReference type="NCBI Taxonomy" id="365044"/>
    <lineage>
        <taxon>Bacteria</taxon>
        <taxon>Pseudomonadati</taxon>
        <taxon>Pseudomonadota</taxon>
        <taxon>Betaproteobacteria</taxon>
        <taxon>Burkholderiales</taxon>
        <taxon>Comamonadaceae</taxon>
        <taxon>Polaromonas</taxon>
    </lineage>
</organism>
<feature type="chain" id="PRO_1000083902" description="Urease accessory protein UreE">
    <location>
        <begin position="1"/>
        <end position="208"/>
    </location>
</feature>
<feature type="region of interest" description="Disordered" evidence="2">
    <location>
        <begin position="145"/>
        <end position="165"/>
    </location>
</feature>
<keyword id="KW-0143">Chaperone</keyword>
<keyword id="KW-0963">Cytoplasm</keyword>
<keyword id="KW-0533">Nickel</keyword>
<keyword id="KW-0996">Nickel insertion</keyword>
<keyword id="KW-1185">Reference proteome</keyword>
<gene>
    <name evidence="1" type="primary">ureE</name>
    <name type="ordered locus">Pnap_0973</name>
</gene>
<evidence type="ECO:0000255" key="1">
    <source>
        <dbReference type="HAMAP-Rule" id="MF_00822"/>
    </source>
</evidence>
<evidence type="ECO:0000256" key="2">
    <source>
        <dbReference type="SAM" id="MobiDB-lite"/>
    </source>
</evidence>
<protein>
    <recommendedName>
        <fullName evidence="1">Urease accessory protein UreE</fullName>
    </recommendedName>
</protein>
<sequence>MLQISKLISQGAGLAPVLVKRASTLEIDWDVRQKSRFDALDSLGRQLGVFLPRGTLVRGGDVLIAEDGSMVRVIAAPQPVLRITACASHGSAFDLTRAAYHLGNRHVPIELKPDHLKIEPDHVLADMLRAMHLTVQEVSEAFEPEGGAYSAGGHGHTHAPAATPVPAAVPPAAHVHGPDCNHGHDHAHAPQAIKPVAIQIHPRKPHSH</sequence>
<dbReference type="EMBL" id="CP000529">
    <property type="protein sequence ID" value="ABM36290.1"/>
    <property type="molecule type" value="Genomic_DNA"/>
</dbReference>
<dbReference type="RefSeq" id="WP_011800384.1">
    <property type="nucleotide sequence ID" value="NC_008781.1"/>
</dbReference>
<dbReference type="SMR" id="A1VKW2"/>
<dbReference type="STRING" id="365044.Pnap_0973"/>
<dbReference type="KEGG" id="pna:Pnap_0973"/>
<dbReference type="eggNOG" id="COG2371">
    <property type="taxonomic scope" value="Bacteria"/>
</dbReference>
<dbReference type="HOGENOM" id="CLU_093757_0_0_4"/>
<dbReference type="OrthoDB" id="5421304at2"/>
<dbReference type="Proteomes" id="UP000000644">
    <property type="component" value="Chromosome"/>
</dbReference>
<dbReference type="GO" id="GO:0005737">
    <property type="term" value="C:cytoplasm"/>
    <property type="evidence" value="ECO:0007669"/>
    <property type="project" value="UniProtKB-SubCell"/>
</dbReference>
<dbReference type="GO" id="GO:0016151">
    <property type="term" value="F:nickel cation binding"/>
    <property type="evidence" value="ECO:0007669"/>
    <property type="project" value="UniProtKB-UniRule"/>
</dbReference>
<dbReference type="GO" id="GO:0051082">
    <property type="term" value="F:unfolded protein binding"/>
    <property type="evidence" value="ECO:0007669"/>
    <property type="project" value="UniProtKB-UniRule"/>
</dbReference>
<dbReference type="GO" id="GO:0006457">
    <property type="term" value="P:protein folding"/>
    <property type="evidence" value="ECO:0007669"/>
    <property type="project" value="InterPro"/>
</dbReference>
<dbReference type="GO" id="GO:0065003">
    <property type="term" value="P:protein-containing complex assembly"/>
    <property type="evidence" value="ECO:0007669"/>
    <property type="project" value="InterPro"/>
</dbReference>
<dbReference type="GO" id="GO:0019627">
    <property type="term" value="P:urea metabolic process"/>
    <property type="evidence" value="ECO:0007669"/>
    <property type="project" value="InterPro"/>
</dbReference>
<dbReference type="CDD" id="cd00571">
    <property type="entry name" value="UreE"/>
    <property type="match status" value="1"/>
</dbReference>
<dbReference type="Gene3D" id="2.60.260.20">
    <property type="entry name" value="Urease metallochaperone UreE, N-terminal domain"/>
    <property type="match status" value="1"/>
</dbReference>
<dbReference type="Gene3D" id="3.30.70.790">
    <property type="entry name" value="UreE, C-terminal domain"/>
    <property type="match status" value="1"/>
</dbReference>
<dbReference type="HAMAP" id="MF_00822">
    <property type="entry name" value="UreE"/>
    <property type="match status" value="1"/>
</dbReference>
<dbReference type="InterPro" id="IPR012406">
    <property type="entry name" value="UreE"/>
</dbReference>
<dbReference type="InterPro" id="IPR007864">
    <property type="entry name" value="UreE_C_dom"/>
</dbReference>
<dbReference type="InterPro" id="IPR004029">
    <property type="entry name" value="UreE_N"/>
</dbReference>
<dbReference type="InterPro" id="IPR036118">
    <property type="entry name" value="UreE_N_sf"/>
</dbReference>
<dbReference type="NCBIfam" id="NF009751">
    <property type="entry name" value="PRK13261.1-1"/>
    <property type="match status" value="1"/>
</dbReference>
<dbReference type="NCBIfam" id="NF009762">
    <property type="entry name" value="PRK13263.1"/>
    <property type="match status" value="1"/>
</dbReference>
<dbReference type="Pfam" id="PF05194">
    <property type="entry name" value="UreE_C"/>
    <property type="match status" value="1"/>
</dbReference>
<dbReference type="Pfam" id="PF02814">
    <property type="entry name" value="UreE_N"/>
    <property type="match status" value="1"/>
</dbReference>
<dbReference type="PIRSF" id="PIRSF036402">
    <property type="entry name" value="Ureas_acces_UreE"/>
    <property type="match status" value="1"/>
</dbReference>
<dbReference type="SMART" id="SM00988">
    <property type="entry name" value="UreE_N"/>
    <property type="match status" value="1"/>
</dbReference>
<dbReference type="SUPFAM" id="SSF69737">
    <property type="entry name" value="Urease metallochaperone UreE, C-terminal domain"/>
    <property type="match status" value="1"/>
</dbReference>
<dbReference type="SUPFAM" id="SSF69287">
    <property type="entry name" value="Urease metallochaperone UreE, N-terminal domain"/>
    <property type="match status" value="1"/>
</dbReference>
<comment type="function">
    <text evidence="1">Involved in urease metallocenter assembly. Binds nickel. Probably functions as a nickel donor during metallocenter assembly.</text>
</comment>
<comment type="subcellular location">
    <subcellularLocation>
        <location evidence="1">Cytoplasm</location>
    </subcellularLocation>
</comment>
<comment type="similarity">
    <text evidence="1">Belongs to the UreE family.</text>
</comment>
<proteinExistence type="inferred from homology"/>
<accession>A1VKW2</accession>